<protein>
    <recommendedName>
        <fullName evidence="1">Probable tRNA sulfurtransferase</fullName>
        <ecNumber evidence="1">2.8.1.4</ecNumber>
    </recommendedName>
    <alternativeName>
        <fullName evidence="1">Sulfur carrier protein ThiS sulfurtransferase</fullName>
    </alternativeName>
    <alternativeName>
        <fullName evidence="1">Thiamine biosynthesis protein ThiI</fullName>
    </alternativeName>
    <alternativeName>
        <fullName evidence="1">tRNA 4-thiouridine synthase</fullName>
    </alternativeName>
</protein>
<comment type="function">
    <text evidence="1">Catalyzes the ATP-dependent transfer of a sulfur to tRNA to produce 4-thiouridine in position 8 of tRNAs, which functions as a near-UV photosensor. Also catalyzes the transfer of sulfur to the sulfur carrier protein ThiS, forming ThiS-thiocarboxylate. This is a step in the synthesis of thiazole, in the thiamine biosynthesis pathway. The sulfur is donated as persulfide by IscS.</text>
</comment>
<comment type="catalytic activity">
    <reaction evidence="1">
        <text>[ThiI sulfur-carrier protein]-S-sulfanyl-L-cysteine + a uridine in tRNA + 2 reduced [2Fe-2S]-[ferredoxin] + ATP + H(+) = [ThiI sulfur-carrier protein]-L-cysteine + a 4-thiouridine in tRNA + 2 oxidized [2Fe-2S]-[ferredoxin] + AMP + diphosphate</text>
        <dbReference type="Rhea" id="RHEA:24176"/>
        <dbReference type="Rhea" id="RHEA-COMP:10000"/>
        <dbReference type="Rhea" id="RHEA-COMP:10001"/>
        <dbReference type="Rhea" id="RHEA-COMP:13337"/>
        <dbReference type="Rhea" id="RHEA-COMP:13338"/>
        <dbReference type="Rhea" id="RHEA-COMP:13339"/>
        <dbReference type="Rhea" id="RHEA-COMP:13340"/>
        <dbReference type="ChEBI" id="CHEBI:15378"/>
        <dbReference type="ChEBI" id="CHEBI:29950"/>
        <dbReference type="ChEBI" id="CHEBI:30616"/>
        <dbReference type="ChEBI" id="CHEBI:33019"/>
        <dbReference type="ChEBI" id="CHEBI:33737"/>
        <dbReference type="ChEBI" id="CHEBI:33738"/>
        <dbReference type="ChEBI" id="CHEBI:61963"/>
        <dbReference type="ChEBI" id="CHEBI:65315"/>
        <dbReference type="ChEBI" id="CHEBI:136798"/>
        <dbReference type="ChEBI" id="CHEBI:456215"/>
        <dbReference type="EC" id="2.8.1.4"/>
    </reaction>
</comment>
<comment type="catalytic activity">
    <reaction evidence="1">
        <text>[ThiS sulfur-carrier protein]-C-terminal Gly-Gly-AMP + S-sulfanyl-L-cysteinyl-[cysteine desulfurase] + AH2 = [ThiS sulfur-carrier protein]-C-terminal-Gly-aminoethanethioate + L-cysteinyl-[cysteine desulfurase] + A + AMP + 2 H(+)</text>
        <dbReference type="Rhea" id="RHEA:43340"/>
        <dbReference type="Rhea" id="RHEA-COMP:12157"/>
        <dbReference type="Rhea" id="RHEA-COMP:12158"/>
        <dbReference type="Rhea" id="RHEA-COMP:12910"/>
        <dbReference type="Rhea" id="RHEA-COMP:19908"/>
        <dbReference type="ChEBI" id="CHEBI:13193"/>
        <dbReference type="ChEBI" id="CHEBI:15378"/>
        <dbReference type="ChEBI" id="CHEBI:17499"/>
        <dbReference type="ChEBI" id="CHEBI:29950"/>
        <dbReference type="ChEBI" id="CHEBI:61963"/>
        <dbReference type="ChEBI" id="CHEBI:90618"/>
        <dbReference type="ChEBI" id="CHEBI:232372"/>
        <dbReference type="ChEBI" id="CHEBI:456215"/>
    </reaction>
</comment>
<comment type="pathway">
    <text evidence="1">Cofactor biosynthesis; thiamine diphosphate biosynthesis.</text>
</comment>
<comment type="subcellular location">
    <subcellularLocation>
        <location evidence="1">Cytoplasm</location>
    </subcellularLocation>
</comment>
<comment type="similarity">
    <text evidence="1">Belongs to the ThiI family.</text>
</comment>
<evidence type="ECO:0000255" key="1">
    <source>
        <dbReference type="HAMAP-Rule" id="MF_00021"/>
    </source>
</evidence>
<reference key="1">
    <citation type="journal article" date="2009" name="BMC Genomics">
        <title>Genome evolution driven by host adaptations results in a more virulent and antimicrobial-resistant Streptococcus pneumoniae serotype 14.</title>
        <authorList>
            <person name="Ding F."/>
            <person name="Tang P."/>
            <person name="Hsu M.-H."/>
            <person name="Cui P."/>
            <person name="Hu S."/>
            <person name="Yu J."/>
            <person name="Chiu C.-H."/>
        </authorList>
    </citation>
    <scope>NUCLEOTIDE SEQUENCE [LARGE SCALE GENOMIC DNA]</scope>
    <source>
        <strain>CGSP14</strain>
    </source>
</reference>
<dbReference type="EC" id="2.8.1.4" evidence="1"/>
<dbReference type="EMBL" id="CP001033">
    <property type="protein sequence ID" value="ACB90082.1"/>
    <property type="molecule type" value="Genomic_DNA"/>
</dbReference>
<dbReference type="RefSeq" id="WP_001200084.1">
    <property type="nucleotide sequence ID" value="NC_010582.1"/>
</dbReference>
<dbReference type="SMR" id="B2IP11"/>
<dbReference type="GeneID" id="45653763"/>
<dbReference type="KEGG" id="spw:SPCG_0830"/>
<dbReference type="HOGENOM" id="CLU_037952_4_0_9"/>
<dbReference type="UniPathway" id="UPA00060"/>
<dbReference type="GO" id="GO:0005829">
    <property type="term" value="C:cytosol"/>
    <property type="evidence" value="ECO:0007669"/>
    <property type="project" value="TreeGrafter"/>
</dbReference>
<dbReference type="GO" id="GO:0005524">
    <property type="term" value="F:ATP binding"/>
    <property type="evidence" value="ECO:0007669"/>
    <property type="project" value="UniProtKB-UniRule"/>
</dbReference>
<dbReference type="GO" id="GO:0004810">
    <property type="term" value="F:CCA tRNA nucleotidyltransferase activity"/>
    <property type="evidence" value="ECO:0007669"/>
    <property type="project" value="InterPro"/>
</dbReference>
<dbReference type="GO" id="GO:0000049">
    <property type="term" value="F:tRNA binding"/>
    <property type="evidence" value="ECO:0007669"/>
    <property type="project" value="UniProtKB-UniRule"/>
</dbReference>
<dbReference type="GO" id="GO:0140741">
    <property type="term" value="F:tRNA-uracil-4 sulfurtransferase activity"/>
    <property type="evidence" value="ECO:0007669"/>
    <property type="project" value="UniProtKB-EC"/>
</dbReference>
<dbReference type="GO" id="GO:0009228">
    <property type="term" value="P:thiamine biosynthetic process"/>
    <property type="evidence" value="ECO:0007669"/>
    <property type="project" value="UniProtKB-KW"/>
</dbReference>
<dbReference type="GO" id="GO:0009229">
    <property type="term" value="P:thiamine diphosphate biosynthetic process"/>
    <property type="evidence" value="ECO:0007669"/>
    <property type="project" value="UniProtKB-UniRule"/>
</dbReference>
<dbReference type="GO" id="GO:0052837">
    <property type="term" value="P:thiazole biosynthetic process"/>
    <property type="evidence" value="ECO:0007669"/>
    <property type="project" value="TreeGrafter"/>
</dbReference>
<dbReference type="GO" id="GO:0002937">
    <property type="term" value="P:tRNA 4-thiouridine biosynthesis"/>
    <property type="evidence" value="ECO:0007669"/>
    <property type="project" value="TreeGrafter"/>
</dbReference>
<dbReference type="CDD" id="cd01712">
    <property type="entry name" value="PPase_ThiI"/>
    <property type="match status" value="1"/>
</dbReference>
<dbReference type="CDD" id="cd11716">
    <property type="entry name" value="THUMP_ThiI"/>
    <property type="match status" value="1"/>
</dbReference>
<dbReference type="FunFam" id="3.30.2130.30:FF:000006">
    <property type="entry name" value="Probable tRNA sulfurtransferase"/>
    <property type="match status" value="1"/>
</dbReference>
<dbReference type="FunFam" id="3.40.50.620:FF:000053">
    <property type="entry name" value="Probable tRNA sulfurtransferase"/>
    <property type="match status" value="1"/>
</dbReference>
<dbReference type="Gene3D" id="3.30.2130.30">
    <property type="match status" value="1"/>
</dbReference>
<dbReference type="Gene3D" id="3.40.50.620">
    <property type="entry name" value="HUPs"/>
    <property type="match status" value="1"/>
</dbReference>
<dbReference type="HAMAP" id="MF_00021">
    <property type="entry name" value="ThiI"/>
    <property type="match status" value="1"/>
</dbReference>
<dbReference type="InterPro" id="IPR014729">
    <property type="entry name" value="Rossmann-like_a/b/a_fold"/>
</dbReference>
<dbReference type="InterPro" id="IPR020536">
    <property type="entry name" value="ThiI_AANH"/>
</dbReference>
<dbReference type="InterPro" id="IPR054173">
    <property type="entry name" value="ThiI_fer"/>
</dbReference>
<dbReference type="InterPro" id="IPR049961">
    <property type="entry name" value="ThiI_N"/>
</dbReference>
<dbReference type="InterPro" id="IPR004114">
    <property type="entry name" value="THUMP_dom"/>
</dbReference>
<dbReference type="InterPro" id="IPR049962">
    <property type="entry name" value="THUMP_ThiI"/>
</dbReference>
<dbReference type="InterPro" id="IPR003720">
    <property type="entry name" value="tRNA_STrfase"/>
</dbReference>
<dbReference type="InterPro" id="IPR050102">
    <property type="entry name" value="tRNA_sulfurtransferase_ThiI"/>
</dbReference>
<dbReference type="NCBIfam" id="TIGR00342">
    <property type="entry name" value="tRNA uracil 4-sulfurtransferase ThiI"/>
    <property type="match status" value="1"/>
</dbReference>
<dbReference type="PANTHER" id="PTHR43209">
    <property type="entry name" value="TRNA SULFURTRANSFERASE"/>
    <property type="match status" value="1"/>
</dbReference>
<dbReference type="PANTHER" id="PTHR43209:SF1">
    <property type="entry name" value="TRNA SULFURTRANSFERASE"/>
    <property type="match status" value="1"/>
</dbReference>
<dbReference type="Pfam" id="PF02568">
    <property type="entry name" value="ThiI"/>
    <property type="match status" value="1"/>
</dbReference>
<dbReference type="Pfam" id="PF22025">
    <property type="entry name" value="ThiI_fer"/>
    <property type="match status" value="1"/>
</dbReference>
<dbReference type="Pfam" id="PF02926">
    <property type="entry name" value="THUMP"/>
    <property type="match status" value="1"/>
</dbReference>
<dbReference type="SMART" id="SM00981">
    <property type="entry name" value="THUMP"/>
    <property type="match status" value="1"/>
</dbReference>
<dbReference type="SUPFAM" id="SSF52402">
    <property type="entry name" value="Adenine nucleotide alpha hydrolases-like"/>
    <property type="match status" value="1"/>
</dbReference>
<dbReference type="SUPFAM" id="SSF143437">
    <property type="entry name" value="THUMP domain-like"/>
    <property type="match status" value="1"/>
</dbReference>
<dbReference type="PROSITE" id="PS51165">
    <property type="entry name" value="THUMP"/>
    <property type="match status" value="1"/>
</dbReference>
<gene>
    <name evidence="1" type="primary">thiI</name>
    <name type="ordered locus">SPCG_0830</name>
</gene>
<keyword id="KW-0067">ATP-binding</keyword>
<keyword id="KW-0963">Cytoplasm</keyword>
<keyword id="KW-0547">Nucleotide-binding</keyword>
<keyword id="KW-0694">RNA-binding</keyword>
<keyword id="KW-0784">Thiamine biosynthesis</keyword>
<keyword id="KW-0808">Transferase</keyword>
<keyword id="KW-0820">tRNA-binding</keyword>
<name>THII_STRPS</name>
<accession>B2IP11</accession>
<organism>
    <name type="scientific">Streptococcus pneumoniae (strain CGSP14)</name>
    <dbReference type="NCBI Taxonomy" id="516950"/>
    <lineage>
        <taxon>Bacteria</taxon>
        <taxon>Bacillati</taxon>
        <taxon>Bacillota</taxon>
        <taxon>Bacilli</taxon>
        <taxon>Lactobacillales</taxon>
        <taxon>Streptococcaceae</taxon>
        <taxon>Streptococcus</taxon>
    </lineage>
</organism>
<feature type="chain" id="PRO_1000090039" description="Probable tRNA sulfurtransferase">
    <location>
        <begin position="1"/>
        <end position="404"/>
    </location>
</feature>
<feature type="domain" description="THUMP" evidence="1">
    <location>
        <begin position="60"/>
        <end position="165"/>
    </location>
</feature>
<feature type="binding site" evidence="1">
    <location>
        <begin position="183"/>
        <end position="184"/>
    </location>
    <ligand>
        <name>ATP</name>
        <dbReference type="ChEBI" id="CHEBI:30616"/>
    </ligand>
</feature>
<feature type="binding site" evidence="1">
    <location>
        <begin position="208"/>
        <end position="209"/>
    </location>
    <ligand>
        <name>ATP</name>
        <dbReference type="ChEBI" id="CHEBI:30616"/>
    </ligand>
</feature>
<feature type="binding site" evidence="1">
    <location>
        <position position="265"/>
    </location>
    <ligand>
        <name>ATP</name>
        <dbReference type="ChEBI" id="CHEBI:30616"/>
    </ligand>
</feature>
<feature type="binding site" evidence="1">
    <location>
        <position position="287"/>
    </location>
    <ligand>
        <name>ATP</name>
        <dbReference type="ChEBI" id="CHEBI:30616"/>
    </ligand>
</feature>
<feature type="binding site" evidence="1">
    <location>
        <position position="296"/>
    </location>
    <ligand>
        <name>ATP</name>
        <dbReference type="ChEBI" id="CHEBI:30616"/>
    </ligand>
</feature>
<sequence length="404" mass="45161">MQYSEIMIRYGELSTKGKNRMRFINKLRNNISDVLSIYTQVKVTADRDRAHAYLNGADYTAVAESLKQVFGIQNFSPVYKVEKSVEVLKSSVQEIMRDIYKEGMTFKISSKRSDHNFELDSRELNQTLGGAVFEAIPNVQVQMKSPDINLQVEIREEAAYLSYETIRGAGGLPVGTSGKGMLMLSGGIDSPVAGYLALKRGVDIEAVHFASPPYTSPGALKKAQDLTRKLTKFGGNIQFIEVPFTEIQEEIKAKAPEAYLMTLTRRFMMRITDRIREVRNGLVIINGESLGQVASQTLESMKAINAVTNTPIIRPVVTMDKLEIIDIAQEIDTFDISIQPFEDCCTIFAPDRPKTNPKIKNAEQYEARMDVEGLVERAVAGIMITEITPQAEKDEVDDLIDNLL</sequence>
<proteinExistence type="inferred from homology"/>